<evidence type="ECO:0000250" key="1"/>
<evidence type="ECO:0000255" key="2">
    <source>
        <dbReference type="PROSITE-ProRule" id="PRU00409"/>
    </source>
</evidence>
<evidence type="ECO:0000305" key="3"/>
<gene>
    <name type="primary">cphA</name>
    <name type="ordered locus">cce_2237</name>
</gene>
<protein>
    <recommendedName>
        <fullName>Cyanophycin synthetase</fullName>
        <ecNumber>6.3.2.29</ecNumber>
        <ecNumber>6.3.2.30</ecNumber>
    </recommendedName>
    <alternativeName>
        <fullName>Cyanophycin synthase</fullName>
    </alternativeName>
</protein>
<dbReference type="EC" id="6.3.2.29"/>
<dbReference type="EC" id="6.3.2.30"/>
<dbReference type="EMBL" id="AF279247">
    <property type="protein sequence ID" value="AAF97933.1"/>
    <property type="molecule type" value="Genomic_DNA"/>
</dbReference>
<dbReference type="EMBL" id="CP000806">
    <property type="protein sequence ID" value="ACB51587.1"/>
    <property type="molecule type" value="Genomic_DNA"/>
</dbReference>
<dbReference type="RefSeq" id="WP_009546983.1">
    <property type="nucleotide sequence ID" value="NC_010546.1"/>
</dbReference>
<dbReference type="SMR" id="Q9KGY4"/>
<dbReference type="STRING" id="43989.cce_2237"/>
<dbReference type="KEGG" id="cyt:cce_2237"/>
<dbReference type="eggNOG" id="COG0769">
    <property type="taxonomic scope" value="Bacteria"/>
</dbReference>
<dbReference type="eggNOG" id="COG1181">
    <property type="taxonomic scope" value="Bacteria"/>
</dbReference>
<dbReference type="HOGENOM" id="CLU_016806_0_0_3"/>
<dbReference type="OrthoDB" id="9803907at2"/>
<dbReference type="BRENDA" id="6.3.2.29">
    <property type="organism ID" value="8115"/>
</dbReference>
<dbReference type="BRENDA" id="6.3.2.30">
    <property type="organism ID" value="8115"/>
</dbReference>
<dbReference type="Proteomes" id="UP000001203">
    <property type="component" value="Chromosome circular"/>
</dbReference>
<dbReference type="GO" id="GO:0005524">
    <property type="term" value="F:ATP binding"/>
    <property type="evidence" value="ECO:0007669"/>
    <property type="project" value="UniProtKB-KW"/>
</dbReference>
<dbReference type="GO" id="GO:0071161">
    <property type="term" value="F:cyanophycin synthetase activity (L-arginine-adding)"/>
    <property type="evidence" value="ECO:0007669"/>
    <property type="project" value="UniProtKB-EC"/>
</dbReference>
<dbReference type="GO" id="GO:0071160">
    <property type="term" value="F:cyanophycin synthetase activity (L-aspartate-adding)"/>
    <property type="evidence" value="ECO:0007669"/>
    <property type="project" value="UniProtKB-EC"/>
</dbReference>
<dbReference type="GO" id="GO:0046872">
    <property type="term" value="F:metal ion binding"/>
    <property type="evidence" value="ECO:0007669"/>
    <property type="project" value="InterPro"/>
</dbReference>
<dbReference type="GO" id="GO:0009058">
    <property type="term" value="P:biosynthetic process"/>
    <property type="evidence" value="ECO:0007669"/>
    <property type="project" value="InterPro"/>
</dbReference>
<dbReference type="Gene3D" id="3.30.470.20">
    <property type="entry name" value="ATP-grasp fold, B domain"/>
    <property type="match status" value="2"/>
</dbReference>
<dbReference type="Gene3D" id="3.90.190.20">
    <property type="entry name" value="Mur ligase, C-terminal domain"/>
    <property type="match status" value="1"/>
</dbReference>
<dbReference type="Gene3D" id="3.40.1190.10">
    <property type="entry name" value="Mur-like, catalytic domain"/>
    <property type="match status" value="1"/>
</dbReference>
<dbReference type="InterPro" id="IPR011761">
    <property type="entry name" value="ATP-grasp"/>
</dbReference>
<dbReference type="InterPro" id="IPR005479">
    <property type="entry name" value="CbamoylP_synth_lsu-like_ATP-bd"/>
</dbReference>
<dbReference type="InterPro" id="IPR011810">
    <property type="entry name" value="Cya_phycin_syn"/>
</dbReference>
<dbReference type="InterPro" id="IPR044019">
    <property type="entry name" value="Cyanophycin_syn_N"/>
</dbReference>
<dbReference type="InterPro" id="IPR036565">
    <property type="entry name" value="Mur-like_cat_sf"/>
</dbReference>
<dbReference type="InterPro" id="IPR004101">
    <property type="entry name" value="Mur_ligase_C"/>
</dbReference>
<dbReference type="InterPro" id="IPR036615">
    <property type="entry name" value="Mur_ligase_C_dom_sf"/>
</dbReference>
<dbReference type="InterPro" id="IPR013221">
    <property type="entry name" value="Mur_ligase_cen"/>
</dbReference>
<dbReference type="NCBIfam" id="TIGR02068">
    <property type="entry name" value="cya_phycin_syn"/>
    <property type="match status" value="1"/>
</dbReference>
<dbReference type="NCBIfam" id="NF010623">
    <property type="entry name" value="PRK14016.1"/>
    <property type="match status" value="1"/>
</dbReference>
<dbReference type="PANTHER" id="PTHR23135:SF18">
    <property type="entry name" value="CYANOPHYCIN SYNTHETASE"/>
    <property type="match status" value="1"/>
</dbReference>
<dbReference type="PANTHER" id="PTHR23135">
    <property type="entry name" value="MUR LIGASE FAMILY MEMBER"/>
    <property type="match status" value="1"/>
</dbReference>
<dbReference type="Pfam" id="PF02786">
    <property type="entry name" value="CPSase_L_D2"/>
    <property type="match status" value="1"/>
</dbReference>
<dbReference type="Pfam" id="PF18921">
    <property type="entry name" value="Cyanophycin_syn"/>
    <property type="match status" value="1"/>
</dbReference>
<dbReference type="Pfam" id="PF02875">
    <property type="entry name" value="Mur_ligase_C"/>
    <property type="match status" value="1"/>
</dbReference>
<dbReference type="Pfam" id="PF08245">
    <property type="entry name" value="Mur_ligase_M"/>
    <property type="match status" value="1"/>
</dbReference>
<dbReference type="SUPFAM" id="SSF56059">
    <property type="entry name" value="Glutathione synthetase ATP-binding domain-like"/>
    <property type="match status" value="1"/>
</dbReference>
<dbReference type="SUPFAM" id="SSF53623">
    <property type="entry name" value="MurD-like peptide ligases, catalytic domain"/>
    <property type="match status" value="1"/>
</dbReference>
<dbReference type="SUPFAM" id="SSF53244">
    <property type="entry name" value="MurD-like peptide ligases, peptide-binding domain"/>
    <property type="match status" value="1"/>
</dbReference>
<dbReference type="PROSITE" id="PS50975">
    <property type="entry name" value="ATP_GRASP"/>
    <property type="match status" value="1"/>
</dbReference>
<sequence length="872" mass="95230">MKILKTLTLRGPNYWSIRRKKLIVMRLDLEDLADKPSNEIPGFYDGLVEVLPSLVEHYCSPGHRGGFLERVKEGTYMGHIVEHVALELQELTKMPVGFGRTRETATPGIYNVVFEYVDEQAGRYAGRAAVRLCRSIVDTGTYPLKELEQDLSDLQDLQANASLGPSTQTLVTEAEARNIPWMALSARAMVQLGYGVHQKRIQATLSNYSGILAVELACDKEGTKTILQDAGVPVPRGTTIQFFEELESAIDDVGGYPIVIKPLDGNHGRGITIDINSWKEAEEAYDLASEESKTRTVIVERFYKGSDHRLLVINGKLVAVAERVPAHVIGDDKHTIEELIDITNEDPRRGEGHDNVLTRIKVDKTVLGMLDKQGLRLDSILDKGEIVYLRATANLSTGGSAIDRTDDIHPENLWMAERVAKIIGLDIMGIDVVTPDITKPLRDVDGVIVEVNAAPGFRMHVAPSQGLSRNVAAPVMDMLFPPESPSRVPIVAITGTNGKTTTTRLTAHIYRQTGKVVGYTSTDGVYIGEYLVEKGDNTGPFSAGMILKDPTVEVAVLESARGGILRSGLAFDTCDVGIVLNVAADHLGLGDINTIEQMARVKGVVAEVVHADGYAVLNADDPLVAAMAEQVKGKVAYFSMNPDNEIIHNHTRRDGMAAVYENGYISILEGQFTLRIEEAVNVPMTMGGMAPFMIANALAACLAAFCQGVDIEDIRQGVRTFKASANQTPGRMNLFNLGDYHALVDYAHNPAGYEAVGEFVKNWKGQRLGVVGGPGDRRDEDLILLGKIAARVFDRILVKEDDDKRGRARGEAADLIIDGILSENDKADYEAILDETEAIEYGLDKVDKGGLVVIFPESVTRAISLINRRNPI</sequence>
<accession>Q9KGY4</accession>
<accession>B1WPL7</accession>
<organism>
    <name type="scientific">Crocosphaera subtropica (strain ATCC 51142 / BH68)</name>
    <name type="common">Cyanothece sp. (strain ATCC 51142)</name>
    <dbReference type="NCBI Taxonomy" id="43989"/>
    <lineage>
        <taxon>Bacteria</taxon>
        <taxon>Bacillati</taxon>
        <taxon>Cyanobacteriota</taxon>
        <taxon>Cyanophyceae</taxon>
        <taxon>Oscillatoriophycideae</taxon>
        <taxon>Chroococcales</taxon>
        <taxon>Aphanothecaceae</taxon>
        <taxon>Crocosphaera</taxon>
        <taxon>Crocosphaera subtropica</taxon>
    </lineage>
</organism>
<keyword id="KW-0067">ATP-binding</keyword>
<keyword id="KW-0436">Ligase</keyword>
<keyword id="KW-0547">Nucleotide-binding</keyword>
<keyword id="KW-1185">Reference proteome</keyword>
<feature type="chain" id="PRO_0000101713" description="Cyanophycin synthetase">
    <location>
        <begin position="1"/>
        <end position="872"/>
    </location>
</feature>
<feature type="domain" description="ATP-grasp" evidence="2">
    <location>
        <begin position="224"/>
        <end position="480"/>
    </location>
</feature>
<feature type="binding site" evidence="2">
    <location>
        <begin position="495"/>
        <end position="501"/>
    </location>
    <ligand>
        <name>ATP</name>
        <dbReference type="ChEBI" id="CHEBI:30616"/>
    </ligand>
</feature>
<reference key="1">
    <citation type="submission" date="2000-06" db="EMBL/GenBank/DDBJ databases">
        <title>Cyanophycin dynamics in diazatrophic and non-diazatrophic cyanobacteria.</title>
        <authorList>
            <person name="Li H."/>
            <person name="Sherman D.M."/>
            <person name="Bao S."/>
            <person name="Sherman L.A."/>
        </authorList>
    </citation>
    <scope>NUCLEOTIDE SEQUENCE [GENOMIC DNA]</scope>
</reference>
<reference key="2">
    <citation type="journal article" date="2008" name="Proc. Natl. Acad. Sci. U.S.A.">
        <title>The genome of Cyanothece 51142, a unicellular diazotrophic cyanobacterium important in the marine nitrogen cycle.</title>
        <authorList>
            <person name="Welsh E.A."/>
            <person name="Liberton M."/>
            <person name="Stoeckel J."/>
            <person name="Loh T."/>
            <person name="Elvitigala T."/>
            <person name="Wang C."/>
            <person name="Wollam A."/>
            <person name="Fulton R.S."/>
            <person name="Clifton S.W."/>
            <person name="Jacobs J.M."/>
            <person name="Aurora R."/>
            <person name="Ghosh B.K."/>
            <person name="Sherman L.A."/>
            <person name="Smith R.D."/>
            <person name="Wilson R.K."/>
            <person name="Pakrasi H.B."/>
        </authorList>
    </citation>
    <scope>NUCLEOTIDE SEQUENCE [LARGE SCALE GENOMIC DNA]</scope>
    <source>
        <strain>ATCC 51142 / BH68</strain>
    </source>
</reference>
<comment type="function">
    <text evidence="1">Catalyzes the ATP-dependent polymerization of arginine and aspartate to multi-L-arginyl-poly-L-aspartic acid (cyanophycin; a water-insoluble reserve polymer).</text>
</comment>
<comment type="catalytic activity">
    <reaction>
        <text>[L-4-(L-arginin-2-N-yl)aspartate](n) + L-aspartate + ATP = [L-4-(L-arginin-2-N-yl)aspartate](n)-L-aspartate + ADP + phosphate + H(+)</text>
        <dbReference type="Rhea" id="RHEA:13277"/>
        <dbReference type="Rhea" id="RHEA-COMP:13728"/>
        <dbReference type="Rhea" id="RHEA-COMP:13733"/>
        <dbReference type="ChEBI" id="CHEBI:15378"/>
        <dbReference type="ChEBI" id="CHEBI:29991"/>
        <dbReference type="ChEBI" id="CHEBI:30616"/>
        <dbReference type="ChEBI" id="CHEBI:43474"/>
        <dbReference type="ChEBI" id="CHEBI:137986"/>
        <dbReference type="ChEBI" id="CHEBI:137990"/>
        <dbReference type="ChEBI" id="CHEBI:456216"/>
        <dbReference type="EC" id="6.3.2.29"/>
    </reaction>
</comment>
<comment type="catalytic activity">
    <reaction>
        <text>[L-4-(L-arginin-2-N-yl)aspartate](n)-L-aspartate + L-arginine + ATP = [L-4-(L-arginin-2-N-yl)aspartate](n+1) + ADP + phosphate + H(+)</text>
        <dbReference type="Rhea" id="RHEA:23888"/>
        <dbReference type="Rhea" id="RHEA-COMP:13732"/>
        <dbReference type="Rhea" id="RHEA-COMP:13733"/>
        <dbReference type="ChEBI" id="CHEBI:15378"/>
        <dbReference type="ChEBI" id="CHEBI:30616"/>
        <dbReference type="ChEBI" id="CHEBI:32682"/>
        <dbReference type="ChEBI" id="CHEBI:43474"/>
        <dbReference type="ChEBI" id="CHEBI:137986"/>
        <dbReference type="ChEBI" id="CHEBI:137990"/>
        <dbReference type="ChEBI" id="CHEBI:456216"/>
        <dbReference type="EC" id="6.3.2.30"/>
    </reaction>
</comment>
<comment type="subunit">
    <text evidence="1">Homodimer.</text>
</comment>
<comment type="similarity">
    <text evidence="3">In the C-terminal section; belongs to the MurCDEF family.</text>
</comment>
<proteinExistence type="inferred from homology"/>
<name>CPHA_CROS5</name>